<gene>
    <name type="primary">Rgs9bp</name>
    <name type="synonym">R9ap</name>
</gene>
<proteinExistence type="evidence at protein level"/>
<sequence>MAREECKALLDALNKTTACYHHLVLTVGGSADTQDLREELQKTRQKARELAVATGARLTVALRDRSLATEERAEFERLWVAFSGCLDLLEADMQRALALGATFPLHAPRRPLVRTGVTGGSSAVAARALSARSLRHEAESDFDVADLPQLEREVLQVGEMIDDMEMKVNVPRWTVQARQAAGAELLSGASAGASSAGGISVEERAGPCDPSKALAATVFSAVLLVAVALALCVAKLS</sequence>
<protein>
    <recommendedName>
        <fullName>Regulator of G-protein signaling 9-binding protein</fullName>
    </recommendedName>
    <alternativeName>
        <fullName>RGS9-anchoring protein</fullName>
    </alternativeName>
</protein>
<keyword id="KW-0175">Coiled coil</keyword>
<keyword id="KW-0472">Membrane</keyword>
<keyword id="KW-1185">Reference proteome</keyword>
<keyword id="KW-0716">Sensory transduction</keyword>
<keyword id="KW-0734">Signal transduction inhibitor</keyword>
<keyword id="KW-0812">Transmembrane</keyword>
<keyword id="KW-1133">Transmembrane helix</keyword>
<keyword id="KW-0844">Vision</keyword>
<feature type="chain" id="PRO_0000287587" description="Regulator of G-protein signaling 9-binding protein">
    <location>
        <begin position="1"/>
        <end position="237"/>
    </location>
</feature>
<feature type="topological domain" description="Cytoplasmic" evidence="1">
    <location>
        <begin position="1"/>
        <end position="212"/>
    </location>
</feature>
<feature type="transmembrane region" description="Helical; Anchor for type IV membrane protein" evidence="1">
    <location>
        <begin position="213"/>
        <end position="233"/>
    </location>
</feature>
<feature type="topological domain" description="Extracellular" evidence="1">
    <location>
        <begin position="234"/>
        <end position="237"/>
    </location>
</feature>
<feature type="region of interest" description="SNARE-like">
    <location>
        <begin position="153"/>
        <end position="202"/>
    </location>
</feature>
<feature type="coiled-coil region" evidence="1">
    <location>
        <begin position="30"/>
        <end position="54"/>
    </location>
</feature>
<feature type="sequence conflict" description="In Ref. 3; AAI18007." evidence="10" ref="3">
    <original>G</original>
    <variation>D</variation>
    <location>
        <position position="182"/>
    </location>
</feature>
<reference key="1">
    <citation type="journal article" date="2002" name="Proc. Natl. Acad. Sci. U.S.A.">
        <title>R9AP, a membrane anchor for the photoreceptor GTPase accelerating protein, RGS9-1.</title>
        <authorList>
            <person name="Hu G."/>
            <person name="Wensel T.G."/>
        </authorList>
    </citation>
    <scope>NUCLEOTIDE SEQUENCE [MRNA]</scope>
    <scope>SUBCELLULAR LOCATION</scope>
    <scope>TISSUE SPECIFICITY</scope>
    <scope>INTERACTION WITH RGS9 AND GNB5</scope>
    <source>
        <strain>C57BL/6 X 129</strain>
        <tissue>Retina</tissue>
    </source>
</reference>
<reference key="2">
    <citation type="journal article" date="2003" name="Mol. Cell. Neurosci.">
        <title>Expression patterns of the RGS9-1 anchoring protein R9AP in the chicken and mouse suggest multiple roles in the nervous system.</title>
        <authorList>
            <person name="Keresztes G."/>
            <person name="Mutai H."/>
            <person name="Hibino H."/>
            <person name="Hudspeth A.J."/>
            <person name="Heller S."/>
        </authorList>
    </citation>
    <scope>NUCLEOTIDE SEQUENCE [MRNA]</scope>
    <scope>TISSUE SPECIFICITY</scope>
    <source>
        <strain>C57BL/6J</strain>
        <tissue>Retina</tissue>
    </source>
</reference>
<reference key="3">
    <citation type="journal article" date="2004" name="Genome Res.">
        <title>The status, quality, and expansion of the NIH full-length cDNA project: the Mammalian Gene Collection (MGC).</title>
        <authorList>
            <consortium name="The MGC Project Team"/>
        </authorList>
    </citation>
    <scope>NUCLEOTIDE SEQUENCE [LARGE SCALE MRNA]</scope>
</reference>
<reference key="4">
    <citation type="journal article" date="2003" name="J. Biol. Chem.">
        <title>Identification of protein kinase C isozymes responsible for the phosphorylation of photoreceptor-specific RGS9-1 at Ser475.</title>
        <authorList>
            <person name="Sokal I."/>
            <person name="Hu G."/>
            <person name="Liang Y."/>
            <person name="Mao M."/>
            <person name="Wensel T.G."/>
            <person name="Palczewski K."/>
        </authorList>
    </citation>
    <scope>INTERACTION WITH RGS9</scope>
</reference>
<reference key="5">
    <citation type="journal article" date="2003" name="J. Biol. Chem.">
        <title>Activation of RGS9-1GTPase acceleration by its membrane anchor, R9AP.</title>
        <authorList>
            <person name="Hu G."/>
            <person name="Zhang Z."/>
            <person name="Wensel T.G."/>
        </authorList>
    </citation>
    <scope>FUNCTION</scope>
</reference>
<reference key="6">
    <citation type="journal article" date="2003" name="J. Neurosci.">
        <title>The DEP domain determines subcellular targeting of the GTPase activating protein RGS9 in vivo.</title>
        <authorList>
            <person name="Martemyanov K.A."/>
            <person name="Lishko P.V."/>
            <person name="Calero N."/>
            <person name="Keresztes G."/>
            <person name="Sokolov M."/>
            <person name="Strissel K.J."/>
            <person name="Leskov I.B."/>
            <person name="Hopp J.A."/>
            <person name="Kolesnikov A.V."/>
            <person name="Chen C.-K."/>
            <person name="Lem J."/>
            <person name="Heller S."/>
            <person name="Burns M.E."/>
            <person name="Arshavsky V.Y."/>
        </authorList>
    </citation>
    <scope>INTERACTION WITH RGS9</scope>
</reference>
<reference key="7">
    <citation type="journal article" date="2004" name="J. Biol. Chem.">
        <title>Absence of the RGS9.Gbeta5 GTPase-activating complex in photoreceptors of the R9AP knockout mouse.</title>
        <authorList>
            <person name="Keresztes G."/>
            <person name="Martemyanov K.A."/>
            <person name="Krispel C.M."/>
            <person name="Mutai H."/>
            <person name="Yoo P.J."/>
            <person name="Maison S.F."/>
            <person name="Burns M.E."/>
            <person name="Arshavsky V.Y."/>
            <person name="Heller S."/>
        </authorList>
    </citation>
    <scope>DISRUPTION PHENOTYPE</scope>
    <scope>FUNCTION</scope>
</reference>
<reference key="8">
    <citation type="journal article" date="2006" name="Biochemistry">
        <title>Kinetic mechanism of RGS9-1 potentiation by R9AP.</title>
        <authorList>
            <person name="Baker S.A."/>
            <person name="Martemyanov K.A."/>
            <person name="Shavkunov A.S."/>
            <person name="Arshavsky V.Y."/>
        </authorList>
    </citation>
    <scope>FUNCTION</scope>
</reference>
<reference key="9">
    <citation type="journal article" date="2006" name="Neuron">
        <title>RGS expression rate-limits recovery of rod photoresponses.</title>
        <authorList>
            <person name="Krispel C.M."/>
            <person name="Chen D."/>
            <person name="Melling N."/>
            <person name="Chen Y.-J."/>
            <person name="Martemyanov K.A."/>
            <person name="Quillinan N."/>
            <person name="Arshavsky V.Y."/>
            <person name="Wensel T.G."/>
            <person name="Chen C.-K."/>
            <person name="Burns M.E."/>
        </authorList>
    </citation>
    <scope>FUNCTION</scope>
    <scope>INTERACTION WITH RGS9 AND GNB5</scope>
</reference>
<organism>
    <name type="scientific">Mus musculus</name>
    <name type="common">Mouse</name>
    <dbReference type="NCBI Taxonomy" id="10090"/>
    <lineage>
        <taxon>Eukaryota</taxon>
        <taxon>Metazoa</taxon>
        <taxon>Chordata</taxon>
        <taxon>Craniata</taxon>
        <taxon>Vertebrata</taxon>
        <taxon>Euteleostomi</taxon>
        <taxon>Mammalia</taxon>
        <taxon>Eutheria</taxon>
        <taxon>Euarchontoglires</taxon>
        <taxon>Glires</taxon>
        <taxon>Rodentia</taxon>
        <taxon>Myomorpha</taxon>
        <taxon>Muroidea</taxon>
        <taxon>Muridae</taxon>
        <taxon>Murinae</taxon>
        <taxon>Mus</taxon>
        <taxon>Mus</taxon>
    </lineage>
</organism>
<dbReference type="EMBL" id="AF483907">
    <property type="protein sequence ID" value="AAM76160.1"/>
    <property type="molecule type" value="mRNA"/>
</dbReference>
<dbReference type="EMBL" id="AY229888">
    <property type="protein sequence ID" value="AAP55847.1"/>
    <property type="molecule type" value="mRNA"/>
</dbReference>
<dbReference type="EMBL" id="BC118006">
    <property type="protein sequence ID" value="AAI18007.1"/>
    <property type="molecule type" value="mRNA"/>
</dbReference>
<dbReference type="CCDS" id="CCDS21153.1"/>
<dbReference type="RefSeq" id="NP_665839.1">
    <property type="nucleotide sequence ID" value="NM_145840.3"/>
</dbReference>
<dbReference type="SMR" id="Q148R9"/>
<dbReference type="FunCoup" id="Q148R9">
    <property type="interactions" value="75"/>
</dbReference>
<dbReference type="STRING" id="10090.ENSMUSP00000065511"/>
<dbReference type="PhosphoSitePlus" id="Q148R9"/>
<dbReference type="PaxDb" id="10090-ENSMUSP00000065511"/>
<dbReference type="ProteomicsDB" id="300370"/>
<dbReference type="Antibodypedia" id="55122">
    <property type="antibodies" value="25 antibodies from 9 providers"/>
</dbReference>
<dbReference type="DNASU" id="243923"/>
<dbReference type="Ensembl" id="ENSMUST00000069912.6">
    <property type="protein sequence ID" value="ENSMUSP00000065511.5"/>
    <property type="gene ID" value="ENSMUSG00000056043.6"/>
</dbReference>
<dbReference type="GeneID" id="243923"/>
<dbReference type="KEGG" id="mmu:243923"/>
<dbReference type="UCSC" id="uc009gkb.2">
    <property type="organism name" value="mouse"/>
</dbReference>
<dbReference type="AGR" id="MGI:2384418"/>
<dbReference type="CTD" id="388531"/>
<dbReference type="MGI" id="MGI:2384418">
    <property type="gene designation" value="Rgs9bp"/>
</dbReference>
<dbReference type="VEuPathDB" id="HostDB:ENSMUSG00000056043"/>
<dbReference type="eggNOG" id="ENOG502QT8D">
    <property type="taxonomic scope" value="Eukaryota"/>
</dbReference>
<dbReference type="GeneTree" id="ENSGT00940000153725"/>
<dbReference type="HOGENOM" id="CLU_093021_0_0_1"/>
<dbReference type="InParanoid" id="Q148R9"/>
<dbReference type="OMA" id="MVNDMEM"/>
<dbReference type="OrthoDB" id="6358515at2759"/>
<dbReference type="PhylomeDB" id="Q148R9"/>
<dbReference type="TreeFam" id="TF331562"/>
<dbReference type="Reactome" id="R-MMU-2514859">
    <property type="pathway name" value="Inactivation, recovery and regulation of the phototransduction cascade"/>
</dbReference>
<dbReference type="BioGRID-ORCS" id="243923">
    <property type="hits" value="3 hits in 77 CRISPR screens"/>
</dbReference>
<dbReference type="ChiTaRS" id="Rgs9bp">
    <property type="organism name" value="mouse"/>
</dbReference>
<dbReference type="PRO" id="PR:Q148R9"/>
<dbReference type="Proteomes" id="UP000000589">
    <property type="component" value="Chromosome 7"/>
</dbReference>
<dbReference type="RNAct" id="Q148R9">
    <property type="molecule type" value="protein"/>
</dbReference>
<dbReference type="Bgee" id="ENSMUSG00000056043">
    <property type="expression patterns" value="Expressed in retinal neural layer and 38 other cell types or tissues"/>
</dbReference>
<dbReference type="GO" id="GO:0016020">
    <property type="term" value="C:membrane"/>
    <property type="evidence" value="ECO:0000304"/>
    <property type="project" value="MGI"/>
</dbReference>
<dbReference type="GO" id="GO:0120200">
    <property type="term" value="C:rod photoreceptor outer segment"/>
    <property type="evidence" value="ECO:0000314"/>
    <property type="project" value="MGI"/>
</dbReference>
<dbReference type="GO" id="GO:0050908">
    <property type="term" value="P:detection of light stimulus involved in visual perception"/>
    <property type="evidence" value="ECO:0000315"/>
    <property type="project" value="MGI"/>
</dbReference>
<dbReference type="GO" id="GO:0009968">
    <property type="term" value="P:negative regulation of signal transduction"/>
    <property type="evidence" value="ECO:0007669"/>
    <property type="project" value="UniProtKB-KW"/>
</dbReference>
<dbReference type="Gene3D" id="1.20.58.70">
    <property type="match status" value="1"/>
</dbReference>
<dbReference type="InterPro" id="IPR026512">
    <property type="entry name" value="RGS7BP/RGS9BP"/>
</dbReference>
<dbReference type="PANTHER" id="PTHR21029">
    <property type="entry name" value="R-SEVEN BINDING PROTEIN (R7BP) HOMOLOG"/>
    <property type="match status" value="1"/>
</dbReference>
<name>R9BP_MOUSE</name>
<comment type="function">
    <text evidence="4 6 8 9">Regulator of G protein-coupled receptor (GPCR) signaling in phototransduction. Participates in the recovery phase of visual transduction via its interaction with RGS9-1 isoform. Acts as a membrane-anchor that mediates the targeting of RGS9-1 to the photoreceptor outer segment, where phototransduction takes place. Enhances the ability of RGS9-1 to stimulate G protein GTPase activity, allowing the visual signal to be terminated on the physiologically time scale. It also controls the proteolytic stability of RGS9-1, probably by protecting it from degradation.</text>
</comment>
<comment type="subunit">
    <text evidence="2 3 5 8">Specifically interacts with isoform RGS9-1 of RGS9. Interaction is decreased when RGS9-1 is phosphorylated at 'Ser-475'. Component of the RGS9-1-Gbeta5 complex composed of RGS9-1, Gbeta5 (GNB5) and RGS9BP.</text>
</comment>
<comment type="subcellular location">
    <subcellularLocation>
        <location evidence="2">Membrane</location>
        <topology evidence="2">Single-pass type IV membrane protein</topology>
    </subcellularLocation>
</comment>
<comment type="tissue specificity">
    <text evidence="2 7">Predominantly expressed in photoreceptors of the retina. Weakly expressed in other areas of the central nervous system.</text>
</comment>
<comment type="disruption phenotype">
    <text evidence="6">Mice show light responses that recover at a abnormally slow rate.</text>
</comment>
<comment type="similarity">
    <text evidence="10">Belongs to the RGS7BP/RGS9BP family.</text>
</comment>
<evidence type="ECO:0000255" key="1"/>
<evidence type="ECO:0000269" key="2">
    <source>
    </source>
</evidence>
<evidence type="ECO:0000269" key="3">
    <source>
    </source>
</evidence>
<evidence type="ECO:0000269" key="4">
    <source>
    </source>
</evidence>
<evidence type="ECO:0000269" key="5">
    <source>
    </source>
</evidence>
<evidence type="ECO:0000269" key="6">
    <source>
    </source>
</evidence>
<evidence type="ECO:0000269" key="7">
    <source>
    </source>
</evidence>
<evidence type="ECO:0000269" key="8">
    <source>
    </source>
</evidence>
<evidence type="ECO:0000269" key="9">
    <source>
    </source>
</evidence>
<evidence type="ECO:0000305" key="10"/>
<accession>Q148R9</accession>
<accession>Q8K462</accession>